<gene>
    <name evidence="1" type="primary">tam</name>
    <name type="ordered locus">OCAR_7047</name>
    <name type="ordered locus">OCA5_c10480</name>
</gene>
<comment type="function">
    <text evidence="1">Catalyzes the S-adenosylmethionine monomethyl esterification of trans-aconitate.</text>
</comment>
<comment type="catalytic activity">
    <reaction evidence="1">
        <text>trans-aconitate + S-adenosyl-L-methionine = (E)-3-(methoxycarbonyl)pent-2-enedioate + S-adenosyl-L-homocysteine</text>
        <dbReference type="Rhea" id="RHEA:14969"/>
        <dbReference type="ChEBI" id="CHEBI:15708"/>
        <dbReference type="ChEBI" id="CHEBI:57470"/>
        <dbReference type="ChEBI" id="CHEBI:57856"/>
        <dbReference type="ChEBI" id="CHEBI:59789"/>
        <dbReference type="EC" id="2.1.1.144"/>
    </reaction>
</comment>
<comment type="subcellular location">
    <subcellularLocation>
        <location evidence="1">Cytoplasm</location>
    </subcellularLocation>
</comment>
<comment type="similarity">
    <text evidence="1">Belongs to the methyltransferase superfamily. Tam family.</text>
</comment>
<protein>
    <recommendedName>
        <fullName evidence="1">Trans-aconitate 2-methyltransferase</fullName>
        <ecNumber evidence="1">2.1.1.144</ecNumber>
    </recommendedName>
</protein>
<organism>
    <name type="scientific">Afipia carboxidovorans (strain ATCC 49405 / DSM 1227 / KCTC 32145 / OM5)</name>
    <name type="common">Oligotropha carboxidovorans</name>
    <dbReference type="NCBI Taxonomy" id="504832"/>
    <lineage>
        <taxon>Bacteria</taxon>
        <taxon>Pseudomonadati</taxon>
        <taxon>Pseudomonadota</taxon>
        <taxon>Alphaproteobacteria</taxon>
        <taxon>Hyphomicrobiales</taxon>
        <taxon>Nitrobacteraceae</taxon>
        <taxon>Afipia</taxon>
    </lineage>
</organism>
<keyword id="KW-0963">Cytoplasm</keyword>
<keyword id="KW-0489">Methyltransferase</keyword>
<keyword id="KW-1185">Reference proteome</keyword>
<keyword id="KW-0949">S-adenosyl-L-methionine</keyword>
<keyword id="KW-0808">Transferase</keyword>
<reference key="1">
    <citation type="journal article" date="2008" name="J. Bacteriol.">
        <title>Genome sequence of the chemolithoautotrophic bacterium Oligotropha carboxidovorans OM5T.</title>
        <authorList>
            <person name="Paul D."/>
            <person name="Bridges S."/>
            <person name="Burgess S.C."/>
            <person name="Dandass Y."/>
            <person name="Lawrence M.L."/>
        </authorList>
    </citation>
    <scope>NUCLEOTIDE SEQUENCE [LARGE SCALE GENOMIC DNA]</scope>
    <source>
        <strain>ATCC 49405 / DSM 1227 / KCTC 32145 / OM5</strain>
    </source>
</reference>
<reference key="2">
    <citation type="journal article" date="2011" name="J. Bacteriol.">
        <title>Complete genome sequences of the chemolithoautotrophic Oligotropha carboxidovorans strains OM4 and OM5.</title>
        <authorList>
            <person name="Volland S."/>
            <person name="Rachinger M."/>
            <person name="Strittmatter A."/>
            <person name="Daniel R."/>
            <person name="Gottschalk G."/>
            <person name="Meyer O."/>
        </authorList>
    </citation>
    <scope>NUCLEOTIDE SEQUENCE [LARGE SCALE GENOMIC DNA]</scope>
    <source>
        <strain>ATCC 49405 / DSM 1227 / KCTC 32145 / OM5</strain>
    </source>
</reference>
<feature type="chain" id="PRO_1000129263" description="Trans-aconitate 2-methyltransferase">
    <location>
        <begin position="1"/>
        <end position="256"/>
    </location>
</feature>
<dbReference type="EC" id="2.1.1.144" evidence="1"/>
<dbReference type="EMBL" id="CP001196">
    <property type="protein sequence ID" value="ACI94155.1"/>
    <property type="molecule type" value="Genomic_DNA"/>
</dbReference>
<dbReference type="EMBL" id="CP002826">
    <property type="protein sequence ID" value="AEI05767.1"/>
    <property type="molecule type" value="Genomic_DNA"/>
</dbReference>
<dbReference type="RefSeq" id="WP_012564181.1">
    <property type="nucleotide sequence ID" value="NC_015684.1"/>
</dbReference>
<dbReference type="SMR" id="B6JIA0"/>
<dbReference type="STRING" id="504832.OCA5_c10480"/>
<dbReference type="KEGG" id="oca:OCAR_7047"/>
<dbReference type="KEGG" id="ocg:OCA5_c10480"/>
<dbReference type="PATRIC" id="fig|504832.7.peg.1114"/>
<dbReference type="eggNOG" id="COG4106">
    <property type="taxonomic scope" value="Bacteria"/>
</dbReference>
<dbReference type="HOGENOM" id="CLU_037990_5_2_5"/>
<dbReference type="OrthoDB" id="9795085at2"/>
<dbReference type="Proteomes" id="UP000007730">
    <property type="component" value="Chromosome"/>
</dbReference>
<dbReference type="GO" id="GO:0005737">
    <property type="term" value="C:cytoplasm"/>
    <property type="evidence" value="ECO:0007669"/>
    <property type="project" value="UniProtKB-SubCell"/>
</dbReference>
<dbReference type="GO" id="GO:0030798">
    <property type="term" value="F:trans-aconitate 2-methyltransferase activity"/>
    <property type="evidence" value="ECO:0007669"/>
    <property type="project" value="UniProtKB-UniRule"/>
</dbReference>
<dbReference type="GO" id="GO:0032259">
    <property type="term" value="P:methylation"/>
    <property type="evidence" value="ECO:0007669"/>
    <property type="project" value="UniProtKB-KW"/>
</dbReference>
<dbReference type="CDD" id="cd02440">
    <property type="entry name" value="AdoMet_MTases"/>
    <property type="match status" value="1"/>
</dbReference>
<dbReference type="Gene3D" id="1.10.150.290">
    <property type="entry name" value="S-adenosyl-L-methionine-dependent methyltransferases"/>
    <property type="match status" value="1"/>
</dbReference>
<dbReference type="Gene3D" id="3.40.50.150">
    <property type="entry name" value="Vaccinia Virus protein VP39"/>
    <property type="match status" value="1"/>
</dbReference>
<dbReference type="HAMAP" id="MF_00560">
    <property type="entry name" value="Tran_acon_Me_trans"/>
    <property type="match status" value="1"/>
</dbReference>
<dbReference type="InterPro" id="IPR041698">
    <property type="entry name" value="Methyltransf_25"/>
</dbReference>
<dbReference type="InterPro" id="IPR029063">
    <property type="entry name" value="SAM-dependent_MTases_sf"/>
</dbReference>
<dbReference type="InterPro" id="IPR023506">
    <property type="entry name" value="Trans-aconitate_MeTrfase"/>
</dbReference>
<dbReference type="InterPro" id="IPR023149">
    <property type="entry name" value="Trans_acon_MeTrfase_C"/>
</dbReference>
<dbReference type="NCBIfam" id="NF002463">
    <property type="entry name" value="PRK01683.1"/>
    <property type="match status" value="1"/>
</dbReference>
<dbReference type="PANTHER" id="PTHR43861:SF1">
    <property type="entry name" value="TRANS-ACONITATE 2-METHYLTRANSFERASE"/>
    <property type="match status" value="1"/>
</dbReference>
<dbReference type="PANTHER" id="PTHR43861">
    <property type="entry name" value="TRANS-ACONITATE 2-METHYLTRANSFERASE-RELATED"/>
    <property type="match status" value="1"/>
</dbReference>
<dbReference type="Pfam" id="PF13649">
    <property type="entry name" value="Methyltransf_25"/>
    <property type="match status" value="1"/>
</dbReference>
<dbReference type="SUPFAM" id="SSF53335">
    <property type="entry name" value="S-adenosyl-L-methionine-dependent methyltransferases"/>
    <property type="match status" value="1"/>
</dbReference>
<sequence length="256" mass="29010">MADWSAEQYLKFEDERTRPARDLLAQIPRLEARQIADIGCGPGNSTELLARRWPQAKIIGIDTSADMLRQARERLPDATFIEANVAHWVPPAGTDILFANAIFQWVPDHLTQFKRLAEGLPEGGVLAVQMPDNLDQPSHALMRQVAQLPQFRKQLAHAAEARAALPHPSVYYDALRPLGRALDIWHTVYHHALDDAAAIVEWVKGTGLRPFLDPLDFPERKEFLEAYTARIAEAYPPRIDGKVLLRFPRFFIVLTR</sequence>
<accession>B6JIA0</accession>
<accession>F8BSX6</accession>
<name>TAM_AFIC5</name>
<evidence type="ECO:0000255" key="1">
    <source>
        <dbReference type="HAMAP-Rule" id="MF_00560"/>
    </source>
</evidence>
<proteinExistence type="inferred from homology"/>